<evidence type="ECO:0000255" key="1">
    <source>
        <dbReference type="HAMAP-Rule" id="MF_00235"/>
    </source>
</evidence>
<dbReference type="EC" id="2.7.4.3" evidence="1"/>
<dbReference type="EMBL" id="CP000521">
    <property type="protein sequence ID" value="ABO11455.2"/>
    <property type="molecule type" value="Genomic_DNA"/>
</dbReference>
<dbReference type="RefSeq" id="WP_001220244.1">
    <property type="nucleotide sequence ID" value="NZ_CP053098.1"/>
</dbReference>
<dbReference type="SMR" id="A3M3G1"/>
<dbReference type="GeneID" id="92892986"/>
<dbReference type="KEGG" id="acb:A1S_1023"/>
<dbReference type="HOGENOM" id="CLU_032354_1_2_6"/>
<dbReference type="UniPathway" id="UPA00588">
    <property type="reaction ID" value="UER00649"/>
</dbReference>
<dbReference type="GO" id="GO:0005737">
    <property type="term" value="C:cytoplasm"/>
    <property type="evidence" value="ECO:0007669"/>
    <property type="project" value="UniProtKB-SubCell"/>
</dbReference>
<dbReference type="GO" id="GO:0004017">
    <property type="term" value="F:adenylate kinase activity"/>
    <property type="evidence" value="ECO:0007669"/>
    <property type="project" value="UniProtKB-UniRule"/>
</dbReference>
<dbReference type="GO" id="GO:0005524">
    <property type="term" value="F:ATP binding"/>
    <property type="evidence" value="ECO:0007669"/>
    <property type="project" value="UniProtKB-UniRule"/>
</dbReference>
<dbReference type="GO" id="GO:0044209">
    <property type="term" value="P:AMP salvage"/>
    <property type="evidence" value="ECO:0007669"/>
    <property type="project" value="UniProtKB-UniRule"/>
</dbReference>
<dbReference type="CDD" id="cd01428">
    <property type="entry name" value="ADK"/>
    <property type="match status" value="1"/>
</dbReference>
<dbReference type="FunFam" id="3.40.50.300:FF:000106">
    <property type="entry name" value="Adenylate kinase mitochondrial"/>
    <property type="match status" value="1"/>
</dbReference>
<dbReference type="Gene3D" id="3.40.50.300">
    <property type="entry name" value="P-loop containing nucleotide triphosphate hydrolases"/>
    <property type="match status" value="1"/>
</dbReference>
<dbReference type="HAMAP" id="MF_00235">
    <property type="entry name" value="Adenylate_kinase_Adk"/>
    <property type="match status" value="1"/>
</dbReference>
<dbReference type="InterPro" id="IPR006259">
    <property type="entry name" value="Adenyl_kin_sub"/>
</dbReference>
<dbReference type="InterPro" id="IPR000850">
    <property type="entry name" value="Adenylat/UMP-CMP_kin"/>
</dbReference>
<dbReference type="InterPro" id="IPR033690">
    <property type="entry name" value="Adenylat_kinase_CS"/>
</dbReference>
<dbReference type="InterPro" id="IPR007862">
    <property type="entry name" value="Adenylate_kinase_lid-dom"/>
</dbReference>
<dbReference type="InterPro" id="IPR027417">
    <property type="entry name" value="P-loop_NTPase"/>
</dbReference>
<dbReference type="NCBIfam" id="TIGR01351">
    <property type="entry name" value="adk"/>
    <property type="match status" value="1"/>
</dbReference>
<dbReference type="NCBIfam" id="NF001379">
    <property type="entry name" value="PRK00279.1-1"/>
    <property type="match status" value="1"/>
</dbReference>
<dbReference type="NCBIfam" id="NF001380">
    <property type="entry name" value="PRK00279.1-2"/>
    <property type="match status" value="1"/>
</dbReference>
<dbReference type="NCBIfam" id="NF001381">
    <property type="entry name" value="PRK00279.1-3"/>
    <property type="match status" value="1"/>
</dbReference>
<dbReference type="NCBIfam" id="NF011100">
    <property type="entry name" value="PRK14527.1"/>
    <property type="match status" value="1"/>
</dbReference>
<dbReference type="PANTHER" id="PTHR23359">
    <property type="entry name" value="NUCLEOTIDE KINASE"/>
    <property type="match status" value="1"/>
</dbReference>
<dbReference type="Pfam" id="PF00406">
    <property type="entry name" value="ADK"/>
    <property type="match status" value="1"/>
</dbReference>
<dbReference type="Pfam" id="PF05191">
    <property type="entry name" value="ADK_lid"/>
    <property type="match status" value="1"/>
</dbReference>
<dbReference type="PRINTS" id="PR00094">
    <property type="entry name" value="ADENYLTKNASE"/>
</dbReference>
<dbReference type="SUPFAM" id="SSF52540">
    <property type="entry name" value="P-loop containing nucleoside triphosphate hydrolases"/>
    <property type="match status" value="1"/>
</dbReference>
<dbReference type="PROSITE" id="PS00113">
    <property type="entry name" value="ADENYLATE_KINASE"/>
    <property type="match status" value="1"/>
</dbReference>
<keyword id="KW-0067">ATP-binding</keyword>
<keyword id="KW-0963">Cytoplasm</keyword>
<keyword id="KW-0418">Kinase</keyword>
<keyword id="KW-0545">Nucleotide biosynthesis</keyword>
<keyword id="KW-0547">Nucleotide-binding</keyword>
<keyword id="KW-0808">Transferase</keyword>
<protein>
    <recommendedName>
        <fullName evidence="1">Adenylate kinase</fullName>
        <shortName evidence="1">AK</shortName>
        <ecNumber evidence="1">2.7.4.3</ecNumber>
    </recommendedName>
    <alternativeName>
        <fullName evidence="1">ATP-AMP transphosphorylase</fullName>
    </alternativeName>
    <alternativeName>
        <fullName evidence="1">ATP:AMP phosphotransferase</fullName>
    </alternativeName>
    <alternativeName>
        <fullName evidence="1">Adenylate monophosphate kinase</fullName>
    </alternativeName>
</protein>
<name>KAD_ACIBT</name>
<feature type="chain" id="PRO_1000100521" description="Adenylate kinase">
    <location>
        <begin position="1"/>
        <end position="217"/>
    </location>
</feature>
<feature type="region of interest" description="NMP" evidence="1">
    <location>
        <begin position="30"/>
        <end position="59"/>
    </location>
</feature>
<feature type="region of interest" description="LID" evidence="1">
    <location>
        <begin position="122"/>
        <end position="159"/>
    </location>
</feature>
<feature type="binding site" evidence="1">
    <location>
        <begin position="10"/>
        <end position="15"/>
    </location>
    <ligand>
        <name>ATP</name>
        <dbReference type="ChEBI" id="CHEBI:30616"/>
    </ligand>
</feature>
<feature type="binding site" evidence="1">
    <location>
        <position position="31"/>
    </location>
    <ligand>
        <name>AMP</name>
        <dbReference type="ChEBI" id="CHEBI:456215"/>
    </ligand>
</feature>
<feature type="binding site" evidence="1">
    <location>
        <position position="36"/>
    </location>
    <ligand>
        <name>AMP</name>
        <dbReference type="ChEBI" id="CHEBI:456215"/>
    </ligand>
</feature>
<feature type="binding site" evidence="1">
    <location>
        <begin position="57"/>
        <end position="59"/>
    </location>
    <ligand>
        <name>AMP</name>
        <dbReference type="ChEBI" id="CHEBI:456215"/>
    </ligand>
</feature>
<feature type="binding site" evidence="1">
    <location>
        <begin position="85"/>
        <end position="88"/>
    </location>
    <ligand>
        <name>AMP</name>
        <dbReference type="ChEBI" id="CHEBI:456215"/>
    </ligand>
</feature>
<feature type="binding site" evidence="1">
    <location>
        <position position="92"/>
    </location>
    <ligand>
        <name>AMP</name>
        <dbReference type="ChEBI" id="CHEBI:456215"/>
    </ligand>
</feature>
<feature type="binding site" evidence="1">
    <location>
        <position position="123"/>
    </location>
    <ligand>
        <name>ATP</name>
        <dbReference type="ChEBI" id="CHEBI:30616"/>
    </ligand>
</feature>
<feature type="binding site" evidence="1">
    <location>
        <begin position="132"/>
        <end position="133"/>
    </location>
    <ligand>
        <name>ATP</name>
        <dbReference type="ChEBI" id="CHEBI:30616"/>
    </ligand>
</feature>
<feature type="binding site" evidence="1">
    <location>
        <position position="156"/>
    </location>
    <ligand>
        <name>AMP</name>
        <dbReference type="ChEBI" id="CHEBI:456215"/>
    </ligand>
</feature>
<feature type="binding site" evidence="1">
    <location>
        <position position="167"/>
    </location>
    <ligand>
        <name>AMP</name>
        <dbReference type="ChEBI" id="CHEBI:456215"/>
    </ligand>
</feature>
<feature type="binding site" evidence="1">
    <location>
        <position position="202"/>
    </location>
    <ligand>
        <name>ATP</name>
        <dbReference type="ChEBI" id="CHEBI:30616"/>
    </ligand>
</feature>
<gene>
    <name evidence="1" type="primary">adk</name>
    <name type="ordered locus">A1S_1023</name>
</gene>
<comment type="function">
    <text evidence="1">Catalyzes the reversible transfer of the terminal phosphate group between ATP and AMP. Plays an important role in cellular energy homeostasis and in adenine nucleotide metabolism.</text>
</comment>
<comment type="catalytic activity">
    <reaction evidence="1">
        <text>AMP + ATP = 2 ADP</text>
        <dbReference type="Rhea" id="RHEA:12973"/>
        <dbReference type="ChEBI" id="CHEBI:30616"/>
        <dbReference type="ChEBI" id="CHEBI:456215"/>
        <dbReference type="ChEBI" id="CHEBI:456216"/>
        <dbReference type="EC" id="2.7.4.3"/>
    </reaction>
</comment>
<comment type="pathway">
    <text evidence="1">Purine metabolism; AMP biosynthesis via salvage pathway; AMP from ADP: step 1/1.</text>
</comment>
<comment type="subunit">
    <text evidence="1">Monomer.</text>
</comment>
<comment type="subcellular location">
    <subcellularLocation>
        <location evidence="1">Cytoplasm</location>
    </subcellularLocation>
</comment>
<comment type="domain">
    <text evidence="1">Consists of three domains, a large central CORE domain and two small peripheral domains, NMPbind and LID, which undergo movements during catalysis. The LID domain closes over the site of phosphoryl transfer upon ATP binding. Assembling and dissambling the active center during each catalytic cycle provides an effective means to prevent ATP hydrolysis.</text>
</comment>
<comment type="similarity">
    <text evidence="1">Belongs to the adenylate kinase family.</text>
</comment>
<accession>A3M3G1</accession>
<sequence>MRIILLGPPGAGKGTQAQLICKRYNIPQISTGDMLRAAIREGTELGLKAKSVMESGGLVSDELIIGLVKERIAQPDCVNGCIFDGFPRTIPQAEALEKEGISIDHVIEIDVPDEEIVKRLSGRRQHPASGRVYHVVYNPPKVEGKDDETGEDLVQRPDDQEETIRKRLASYHTETEQLVGFYQGRAASGENAPTYDKLDGLRTIEDVQKDLFNILDK</sequence>
<proteinExistence type="inferred from homology"/>
<reference key="1">
    <citation type="journal article" date="2007" name="Genes Dev.">
        <title>New insights into Acinetobacter baumannii pathogenesis revealed by high-density pyrosequencing and transposon mutagenesis.</title>
        <authorList>
            <person name="Smith M.G."/>
            <person name="Gianoulis T.A."/>
            <person name="Pukatzki S."/>
            <person name="Mekalanos J.J."/>
            <person name="Ornston L.N."/>
            <person name="Gerstein M."/>
            <person name="Snyder M."/>
        </authorList>
    </citation>
    <scope>NUCLEOTIDE SEQUENCE [LARGE SCALE GENOMIC DNA]</scope>
    <source>
        <strain>ATCC 17978 / DSM 105126 / CIP 53.77 / LMG 1025 / NCDC KC755 / 5377</strain>
    </source>
</reference>
<organism>
    <name type="scientific">Acinetobacter baumannii (strain ATCC 17978 / DSM 105126 / CIP 53.77 / LMG 1025 / NCDC KC755 / 5377)</name>
    <dbReference type="NCBI Taxonomy" id="400667"/>
    <lineage>
        <taxon>Bacteria</taxon>
        <taxon>Pseudomonadati</taxon>
        <taxon>Pseudomonadota</taxon>
        <taxon>Gammaproteobacteria</taxon>
        <taxon>Moraxellales</taxon>
        <taxon>Moraxellaceae</taxon>
        <taxon>Acinetobacter</taxon>
        <taxon>Acinetobacter calcoaceticus/baumannii complex</taxon>
    </lineage>
</organism>